<evidence type="ECO:0000250" key="1"/>
<evidence type="ECO:0000255" key="2"/>
<evidence type="ECO:0000256" key="3">
    <source>
        <dbReference type="SAM" id="MobiDB-lite"/>
    </source>
</evidence>
<evidence type="ECO:0000305" key="4"/>
<reference key="1">
    <citation type="journal article" date="2009" name="Genome Res.">
        <title>Comparative genomics of the fungal pathogens Candida dubliniensis and Candida albicans.</title>
        <authorList>
            <person name="Jackson A.P."/>
            <person name="Gamble J.A."/>
            <person name="Yeomans T."/>
            <person name="Moran G.P."/>
            <person name="Saunders D."/>
            <person name="Harris D."/>
            <person name="Aslett M."/>
            <person name="Barrell J.F."/>
            <person name="Butler G."/>
            <person name="Citiulo F."/>
            <person name="Coleman D.C."/>
            <person name="de Groot P.W.J."/>
            <person name="Goodwin T.J."/>
            <person name="Quail M.A."/>
            <person name="McQuillan J."/>
            <person name="Munro C.A."/>
            <person name="Pain A."/>
            <person name="Poulter R.T."/>
            <person name="Rajandream M.A."/>
            <person name="Renauld H."/>
            <person name="Spiering M.J."/>
            <person name="Tivey A."/>
            <person name="Gow N.A.R."/>
            <person name="Barrell B."/>
            <person name="Sullivan D.J."/>
            <person name="Berriman M."/>
        </authorList>
    </citation>
    <scope>NUCLEOTIDE SEQUENCE [LARGE SCALE GENOMIC DNA]</scope>
    <source>
        <strain>CD36 / ATCC MYA-646 / CBS 7987 / NCPF 3949 / NRRL Y-17841</strain>
    </source>
</reference>
<gene>
    <name type="primary">RRP36</name>
    <name type="ORF">CD36_32570</name>
</gene>
<accession>B9WMA4</accession>
<keyword id="KW-0175">Coiled coil</keyword>
<keyword id="KW-0539">Nucleus</keyword>
<keyword id="KW-0687">Ribonucleoprotein</keyword>
<keyword id="KW-0690">Ribosome biogenesis</keyword>
<keyword id="KW-0698">rRNA processing</keyword>
<dbReference type="EMBL" id="FM992695">
    <property type="protein sequence ID" value="CAX40217.1"/>
    <property type="molecule type" value="Genomic_DNA"/>
</dbReference>
<dbReference type="RefSeq" id="XP_002422213.1">
    <property type="nucleotide sequence ID" value="XM_002422168.1"/>
</dbReference>
<dbReference type="SMR" id="B9WMA4"/>
<dbReference type="GeneID" id="8049362"/>
<dbReference type="KEGG" id="cdu:CD36_32570"/>
<dbReference type="CGD" id="CAL0000159549">
    <property type="gene designation" value="Cd36_32570"/>
</dbReference>
<dbReference type="VEuPathDB" id="FungiDB:CD36_32570"/>
<dbReference type="eggNOG" id="KOG3190">
    <property type="taxonomic scope" value="Eukaryota"/>
</dbReference>
<dbReference type="HOGENOM" id="CLU_048802_3_0_1"/>
<dbReference type="OrthoDB" id="448446at2759"/>
<dbReference type="Proteomes" id="UP000002605">
    <property type="component" value="Chromosome R"/>
</dbReference>
<dbReference type="GO" id="GO:0030686">
    <property type="term" value="C:90S preribosome"/>
    <property type="evidence" value="ECO:0007669"/>
    <property type="project" value="TreeGrafter"/>
</dbReference>
<dbReference type="GO" id="GO:0005730">
    <property type="term" value="C:nucleolus"/>
    <property type="evidence" value="ECO:0007669"/>
    <property type="project" value="UniProtKB-SubCell"/>
</dbReference>
<dbReference type="GO" id="GO:0000462">
    <property type="term" value="P:maturation of SSU-rRNA from tricistronic rRNA transcript (SSU-rRNA, 5.8S rRNA, LSU-rRNA)"/>
    <property type="evidence" value="ECO:0007669"/>
    <property type="project" value="TreeGrafter"/>
</dbReference>
<dbReference type="InterPro" id="IPR009292">
    <property type="entry name" value="RRP36"/>
</dbReference>
<dbReference type="PANTHER" id="PTHR21738">
    <property type="entry name" value="RIBOSOMAL RNA PROCESSING PROTEIN 36 HOMOLOG"/>
    <property type="match status" value="1"/>
</dbReference>
<dbReference type="PANTHER" id="PTHR21738:SF0">
    <property type="entry name" value="RIBOSOMAL RNA PROCESSING PROTEIN 36 HOMOLOG"/>
    <property type="match status" value="1"/>
</dbReference>
<dbReference type="Pfam" id="PF06102">
    <property type="entry name" value="RRP36"/>
    <property type="match status" value="1"/>
</dbReference>
<sequence length="285" mass="33432">MSRGKTIRPSYYDEDESSQDELEYTLNKGRSNIGSESDSDVDEMSKISFGALNRAQTKLNKNNQKHKPSSWKENINNSSEEFFDSDSDSDGPPEETSSKDTKKKKNKHAPSESSSKRPVSRIRDIPGLPSRKQQTLHTDIRFDAAYGKADLIKARKDYAFLDEYRKQEIASMESLLKDKKNKLNDDEREEIKLQLQSLKSRMDTLKNRDLENNILSNYKKQQMESFKEGKVNKPYFLKRSDKRKILQKAKFDSMKPKQREKAMERKRKKRLGKEFRQLEFRPTNR</sequence>
<comment type="function">
    <text evidence="1">Component of the 90S pre-ribosome involved in the maturation of rRNAs. Required for early cleavages of the pre-RNAs in the 40S ribosomal subunit maturation pathway (By similarity).</text>
</comment>
<comment type="subunit">
    <text evidence="1">Associates with 90S and pre-40S pre-ribosomal particles.</text>
</comment>
<comment type="subcellular location">
    <subcellularLocation>
        <location evidence="1">Nucleus</location>
        <location evidence="1">Nucleolus</location>
    </subcellularLocation>
</comment>
<comment type="similarity">
    <text evidence="4">Belongs to the RRP36 family.</text>
</comment>
<protein>
    <recommendedName>
        <fullName>rRNA biogenesis protein RRP36</fullName>
    </recommendedName>
    <alternativeName>
        <fullName>Ribosomal RNA-processing protein 36</fullName>
    </alternativeName>
</protein>
<organism>
    <name type="scientific">Candida dubliniensis (strain CD36 / ATCC MYA-646 / CBS 7987 / NCPF 3949 / NRRL Y-17841)</name>
    <name type="common">Yeast</name>
    <dbReference type="NCBI Taxonomy" id="573826"/>
    <lineage>
        <taxon>Eukaryota</taxon>
        <taxon>Fungi</taxon>
        <taxon>Dikarya</taxon>
        <taxon>Ascomycota</taxon>
        <taxon>Saccharomycotina</taxon>
        <taxon>Pichiomycetes</taxon>
        <taxon>Debaryomycetaceae</taxon>
        <taxon>Candida/Lodderomyces clade</taxon>
        <taxon>Candida</taxon>
    </lineage>
</organism>
<feature type="chain" id="PRO_0000397624" description="rRNA biogenesis protein RRP36">
    <location>
        <begin position="1"/>
        <end position="285"/>
    </location>
</feature>
<feature type="region of interest" description="Disordered" evidence="3">
    <location>
        <begin position="1"/>
        <end position="20"/>
    </location>
</feature>
<feature type="region of interest" description="Disordered" evidence="3">
    <location>
        <begin position="26"/>
        <end position="137"/>
    </location>
</feature>
<feature type="region of interest" description="Disordered" evidence="3">
    <location>
        <begin position="247"/>
        <end position="285"/>
    </location>
</feature>
<feature type="coiled-coil region" evidence="2">
    <location>
        <begin position="165"/>
        <end position="209"/>
    </location>
</feature>
<feature type="compositionally biased region" description="Acidic residues" evidence="3">
    <location>
        <begin position="81"/>
        <end position="93"/>
    </location>
</feature>
<feature type="compositionally biased region" description="Basic and acidic residues" evidence="3">
    <location>
        <begin position="249"/>
        <end position="263"/>
    </location>
</feature>
<name>RRP36_CANDC</name>
<proteinExistence type="inferred from homology"/>